<sequence length="260" mass="29090">MKKADAPSSEPPELKALWESWLADLGWQPSEQQQQQLQQLYPLVMAGNRTQNLTRITDPIDFWEKHLWDSLRGLRLLGSWEAIQAQPWRGIDIGTGAGFPGIPAQIALPQTRFTLLDSTQRKIAFVQDILQRLSLTQARAVAQRAEIWGQDPQERGSYDIALARALASAEICAEYCLPLLKVGGRAILYRGHWTEAEAQTLEQALELLGGKLIHVEAFTTPRSRGVRHCLLLEKVAPTPPPYPRSPGTPKRQPLGQSNRP</sequence>
<name>RSMG_SYNJB</name>
<comment type="function">
    <text evidence="1">Specifically methylates the N7 position of a guanine in 16S rRNA.</text>
</comment>
<comment type="subcellular location">
    <subcellularLocation>
        <location evidence="1">Cytoplasm</location>
    </subcellularLocation>
</comment>
<comment type="similarity">
    <text evidence="1">Belongs to the methyltransferase superfamily. RNA methyltransferase RsmG family.</text>
</comment>
<proteinExistence type="inferred from homology"/>
<dbReference type="EC" id="2.1.1.-" evidence="1"/>
<dbReference type="EMBL" id="CP000240">
    <property type="protein sequence ID" value="ABD02141.1"/>
    <property type="molecule type" value="Genomic_DNA"/>
</dbReference>
<dbReference type="RefSeq" id="WP_011432794.1">
    <property type="nucleotide sequence ID" value="NC_007776.1"/>
</dbReference>
<dbReference type="SMR" id="Q2JMA3"/>
<dbReference type="STRING" id="321332.CYB_1166"/>
<dbReference type="KEGG" id="cyb:CYB_1166"/>
<dbReference type="eggNOG" id="COG0357">
    <property type="taxonomic scope" value="Bacteria"/>
</dbReference>
<dbReference type="HOGENOM" id="CLU_065341_0_2_3"/>
<dbReference type="OrthoDB" id="9808773at2"/>
<dbReference type="Proteomes" id="UP000001938">
    <property type="component" value="Chromosome"/>
</dbReference>
<dbReference type="GO" id="GO:0005829">
    <property type="term" value="C:cytosol"/>
    <property type="evidence" value="ECO:0007669"/>
    <property type="project" value="TreeGrafter"/>
</dbReference>
<dbReference type="GO" id="GO:0070043">
    <property type="term" value="F:rRNA (guanine-N7-)-methyltransferase activity"/>
    <property type="evidence" value="ECO:0007669"/>
    <property type="project" value="UniProtKB-UniRule"/>
</dbReference>
<dbReference type="FunFam" id="3.40.50.150:FF:000041">
    <property type="entry name" value="Ribosomal RNA small subunit methyltransferase G"/>
    <property type="match status" value="1"/>
</dbReference>
<dbReference type="Gene3D" id="3.40.50.150">
    <property type="entry name" value="Vaccinia Virus protein VP39"/>
    <property type="match status" value="1"/>
</dbReference>
<dbReference type="HAMAP" id="MF_00074">
    <property type="entry name" value="16SrRNA_methyltr_G"/>
    <property type="match status" value="1"/>
</dbReference>
<dbReference type="InterPro" id="IPR003682">
    <property type="entry name" value="rRNA_ssu_MeTfrase_G"/>
</dbReference>
<dbReference type="InterPro" id="IPR029063">
    <property type="entry name" value="SAM-dependent_MTases_sf"/>
</dbReference>
<dbReference type="NCBIfam" id="TIGR00138">
    <property type="entry name" value="rsmG_gidB"/>
    <property type="match status" value="1"/>
</dbReference>
<dbReference type="PANTHER" id="PTHR31760">
    <property type="entry name" value="S-ADENOSYL-L-METHIONINE-DEPENDENT METHYLTRANSFERASES SUPERFAMILY PROTEIN"/>
    <property type="match status" value="1"/>
</dbReference>
<dbReference type="PANTHER" id="PTHR31760:SF0">
    <property type="entry name" value="S-ADENOSYL-L-METHIONINE-DEPENDENT METHYLTRANSFERASES SUPERFAMILY PROTEIN"/>
    <property type="match status" value="1"/>
</dbReference>
<dbReference type="Pfam" id="PF02527">
    <property type="entry name" value="GidB"/>
    <property type="match status" value="1"/>
</dbReference>
<dbReference type="PIRSF" id="PIRSF003078">
    <property type="entry name" value="GidB"/>
    <property type="match status" value="1"/>
</dbReference>
<dbReference type="SUPFAM" id="SSF53335">
    <property type="entry name" value="S-adenosyl-L-methionine-dependent methyltransferases"/>
    <property type="match status" value="1"/>
</dbReference>
<feature type="chain" id="PRO_0000335439" description="Ribosomal RNA small subunit methyltransferase G">
    <location>
        <begin position="1"/>
        <end position="260"/>
    </location>
</feature>
<feature type="region of interest" description="Disordered" evidence="2">
    <location>
        <begin position="236"/>
        <end position="260"/>
    </location>
</feature>
<feature type="compositionally biased region" description="Pro residues" evidence="2">
    <location>
        <begin position="237"/>
        <end position="246"/>
    </location>
</feature>
<feature type="binding site" evidence="1">
    <location>
        <position position="94"/>
    </location>
    <ligand>
        <name>S-adenosyl-L-methionine</name>
        <dbReference type="ChEBI" id="CHEBI:59789"/>
    </ligand>
</feature>
<feature type="binding site" evidence="1">
    <location>
        <position position="99"/>
    </location>
    <ligand>
        <name>S-adenosyl-L-methionine</name>
        <dbReference type="ChEBI" id="CHEBI:59789"/>
    </ligand>
</feature>
<feature type="binding site" evidence="1">
    <location>
        <begin position="117"/>
        <end position="119"/>
    </location>
    <ligand>
        <name>S-adenosyl-L-methionine</name>
        <dbReference type="ChEBI" id="CHEBI:59789"/>
    </ligand>
</feature>
<feature type="binding site" evidence="1">
    <location>
        <begin position="145"/>
        <end position="146"/>
    </location>
    <ligand>
        <name>S-adenosyl-L-methionine</name>
        <dbReference type="ChEBI" id="CHEBI:59789"/>
    </ligand>
</feature>
<feature type="binding site" evidence="1">
    <location>
        <position position="164"/>
    </location>
    <ligand>
        <name>S-adenosyl-L-methionine</name>
        <dbReference type="ChEBI" id="CHEBI:59789"/>
    </ligand>
</feature>
<gene>
    <name evidence="1" type="primary">rsmG</name>
    <name type="ordered locus">CYB_1166</name>
</gene>
<reference key="1">
    <citation type="journal article" date="2007" name="ISME J.">
        <title>Population level functional diversity in a microbial community revealed by comparative genomic and metagenomic analyses.</title>
        <authorList>
            <person name="Bhaya D."/>
            <person name="Grossman A.R."/>
            <person name="Steunou A.-S."/>
            <person name="Khuri N."/>
            <person name="Cohan F.M."/>
            <person name="Hamamura N."/>
            <person name="Melendrez M.C."/>
            <person name="Bateson M.M."/>
            <person name="Ward D.M."/>
            <person name="Heidelberg J.F."/>
        </authorList>
    </citation>
    <scope>NUCLEOTIDE SEQUENCE [LARGE SCALE GENOMIC DNA]</scope>
    <source>
        <strain>JA-2-3B'a(2-13)</strain>
    </source>
</reference>
<organism>
    <name type="scientific">Synechococcus sp. (strain JA-2-3B'a(2-13))</name>
    <name type="common">Cyanobacteria bacterium Yellowstone B-Prime</name>
    <dbReference type="NCBI Taxonomy" id="321332"/>
    <lineage>
        <taxon>Bacteria</taxon>
        <taxon>Bacillati</taxon>
        <taxon>Cyanobacteriota</taxon>
        <taxon>Cyanophyceae</taxon>
        <taxon>Synechococcales</taxon>
        <taxon>Synechococcaceae</taxon>
        <taxon>Synechococcus</taxon>
    </lineage>
</organism>
<accession>Q2JMA3</accession>
<protein>
    <recommendedName>
        <fullName evidence="1">Ribosomal RNA small subunit methyltransferase G</fullName>
        <ecNumber evidence="1">2.1.1.-</ecNumber>
    </recommendedName>
    <alternativeName>
        <fullName evidence="1">16S rRNA 7-methylguanosine methyltransferase</fullName>
        <shortName evidence="1">16S rRNA m7G methyltransferase</shortName>
    </alternativeName>
</protein>
<evidence type="ECO:0000255" key="1">
    <source>
        <dbReference type="HAMAP-Rule" id="MF_00074"/>
    </source>
</evidence>
<evidence type="ECO:0000256" key="2">
    <source>
        <dbReference type="SAM" id="MobiDB-lite"/>
    </source>
</evidence>
<keyword id="KW-0963">Cytoplasm</keyword>
<keyword id="KW-0489">Methyltransferase</keyword>
<keyword id="KW-1185">Reference proteome</keyword>
<keyword id="KW-0698">rRNA processing</keyword>
<keyword id="KW-0949">S-adenosyl-L-methionine</keyword>
<keyword id="KW-0808">Transferase</keyword>